<sequence>MKQGIHPKYEQVTASCSCGNVIKINSTVGHDLNLDVCGECHPFYTGKQRDVASGGRVDRFNKRFSVPGAKK</sequence>
<reference key="1">
    <citation type="submission" date="2007-02" db="EMBL/GenBank/DDBJ databases">
        <title>Complete sequence of chromosome of Yersinia pestis Pestoides F.</title>
        <authorList>
            <consortium name="US DOE Joint Genome Institute"/>
            <person name="Copeland A."/>
            <person name="Lucas S."/>
            <person name="Lapidus A."/>
            <person name="Barry K."/>
            <person name="Detter J.C."/>
            <person name="Glavina del Rio T."/>
            <person name="Hammon N."/>
            <person name="Israni S."/>
            <person name="Dalin E."/>
            <person name="Tice H."/>
            <person name="Pitluck S."/>
            <person name="Di Bartolo G."/>
            <person name="Chain P."/>
            <person name="Malfatti S."/>
            <person name="Shin M."/>
            <person name="Vergez L."/>
            <person name="Schmutz J."/>
            <person name="Larimer F."/>
            <person name="Land M."/>
            <person name="Hauser L."/>
            <person name="Worsham P."/>
            <person name="Chu M."/>
            <person name="Bearden S."/>
            <person name="Garcia E."/>
            <person name="Richardson P."/>
        </authorList>
    </citation>
    <scope>NUCLEOTIDE SEQUENCE [LARGE SCALE GENOMIC DNA]</scope>
    <source>
        <strain>Pestoides F</strain>
    </source>
</reference>
<proteinExistence type="inferred from homology"/>
<dbReference type="EMBL" id="CP000668">
    <property type="protein sequence ID" value="ABP42141.1"/>
    <property type="molecule type" value="Genomic_DNA"/>
</dbReference>
<dbReference type="RefSeq" id="WP_002216737.1">
    <property type="nucleotide sequence ID" value="NZ_CP009715.1"/>
</dbReference>
<dbReference type="SMR" id="A4TS79"/>
<dbReference type="GeneID" id="96663581"/>
<dbReference type="KEGG" id="ypp:YPDSF_3796"/>
<dbReference type="PATRIC" id="fig|386656.14.peg.725"/>
<dbReference type="GO" id="GO:1990904">
    <property type="term" value="C:ribonucleoprotein complex"/>
    <property type="evidence" value="ECO:0007669"/>
    <property type="project" value="UniProtKB-KW"/>
</dbReference>
<dbReference type="GO" id="GO:0005840">
    <property type="term" value="C:ribosome"/>
    <property type="evidence" value="ECO:0007669"/>
    <property type="project" value="UniProtKB-KW"/>
</dbReference>
<dbReference type="GO" id="GO:0046872">
    <property type="term" value="F:metal ion binding"/>
    <property type="evidence" value="ECO:0007669"/>
    <property type="project" value="UniProtKB-KW"/>
</dbReference>
<dbReference type="GO" id="GO:0019843">
    <property type="term" value="F:rRNA binding"/>
    <property type="evidence" value="ECO:0007669"/>
    <property type="project" value="UniProtKB-KW"/>
</dbReference>
<dbReference type="GO" id="GO:0003735">
    <property type="term" value="F:structural constituent of ribosome"/>
    <property type="evidence" value="ECO:0007669"/>
    <property type="project" value="InterPro"/>
</dbReference>
<dbReference type="GO" id="GO:0006412">
    <property type="term" value="P:translation"/>
    <property type="evidence" value="ECO:0007669"/>
    <property type="project" value="UniProtKB-UniRule"/>
</dbReference>
<dbReference type="FunFam" id="4.10.830.30:FF:000001">
    <property type="entry name" value="50S ribosomal protein L31"/>
    <property type="match status" value="1"/>
</dbReference>
<dbReference type="Gene3D" id="4.10.830.30">
    <property type="entry name" value="Ribosomal protein L31"/>
    <property type="match status" value="1"/>
</dbReference>
<dbReference type="HAMAP" id="MF_00501">
    <property type="entry name" value="Ribosomal_bL31_1"/>
    <property type="match status" value="1"/>
</dbReference>
<dbReference type="InterPro" id="IPR034704">
    <property type="entry name" value="Ribosomal_bL28/bL31-like_sf"/>
</dbReference>
<dbReference type="InterPro" id="IPR002150">
    <property type="entry name" value="Ribosomal_bL31"/>
</dbReference>
<dbReference type="InterPro" id="IPR027491">
    <property type="entry name" value="Ribosomal_bL31_A"/>
</dbReference>
<dbReference type="InterPro" id="IPR042105">
    <property type="entry name" value="Ribosomal_bL31_sf"/>
</dbReference>
<dbReference type="NCBIfam" id="TIGR00105">
    <property type="entry name" value="L31"/>
    <property type="match status" value="1"/>
</dbReference>
<dbReference type="NCBIfam" id="NF000612">
    <property type="entry name" value="PRK00019.1"/>
    <property type="match status" value="1"/>
</dbReference>
<dbReference type="PANTHER" id="PTHR33280">
    <property type="entry name" value="50S RIBOSOMAL PROTEIN L31, CHLOROPLASTIC"/>
    <property type="match status" value="1"/>
</dbReference>
<dbReference type="PANTHER" id="PTHR33280:SF6">
    <property type="entry name" value="LARGE RIBOSOMAL SUBUNIT PROTEIN BL31A"/>
    <property type="match status" value="1"/>
</dbReference>
<dbReference type="Pfam" id="PF01197">
    <property type="entry name" value="Ribosomal_L31"/>
    <property type="match status" value="1"/>
</dbReference>
<dbReference type="PRINTS" id="PR01249">
    <property type="entry name" value="RIBOSOMALL31"/>
</dbReference>
<dbReference type="SUPFAM" id="SSF143800">
    <property type="entry name" value="L28p-like"/>
    <property type="match status" value="1"/>
</dbReference>
<dbReference type="PROSITE" id="PS01143">
    <property type="entry name" value="RIBOSOMAL_L31"/>
    <property type="match status" value="1"/>
</dbReference>
<organism>
    <name type="scientific">Yersinia pestis (strain Pestoides F)</name>
    <dbReference type="NCBI Taxonomy" id="386656"/>
    <lineage>
        <taxon>Bacteria</taxon>
        <taxon>Pseudomonadati</taxon>
        <taxon>Pseudomonadota</taxon>
        <taxon>Gammaproteobacteria</taxon>
        <taxon>Enterobacterales</taxon>
        <taxon>Yersiniaceae</taxon>
        <taxon>Yersinia</taxon>
    </lineage>
</organism>
<comment type="function">
    <text evidence="1">Binds the 23S rRNA.</text>
</comment>
<comment type="cofactor">
    <cofactor evidence="1">
        <name>Zn(2+)</name>
        <dbReference type="ChEBI" id="CHEBI:29105"/>
    </cofactor>
    <text evidence="1">Binds 1 zinc ion per subunit.</text>
</comment>
<comment type="subunit">
    <text evidence="1">Part of the 50S ribosomal subunit.</text>
</comment>
<comment type="similarity">
    <text evidence="1">Belongs to the bacterial ribosomal protein bL31 family. Type A subfamily.</text>
</comment>
<keyword id="KW-0479">Metal-binding</keyword>
<keyword id="KW-0687">Ribonucleoprotein</keyword>
<keyword id="KW-0689">Ribosomal protein</keyword>
<keyword id="KW-0694">RNA-binding</keyword>
<keyword id="KW-0699">rRNA-binding</keyword>
<keyword id="KW-0862">Zinc</keyword>
<accession>A4TS79</accession>
<evidence type="ECO:0000255" key="1">
    <source>
        <dbReference type="HAMAP-Rule" id="MF_00501"/>
    </source>
</evidence>
<evidence type="ECO:0000305" key="2"/>
<gene>
    <name evidence="1" type="primary">rpmE</name>
    <name type="ordered locus">YPDSF_3796</name>
</gene>
<feature type="chain" id="PRO_1000126772" description="Large ribosomal subunit protein bL31">
    <location>
        <begin position="1"/>
        <end position="71"/>
    </location>
</feature>
<feature type="binding site" evidence="1">
    <location>
        <position position="16"/>
    </location>
    <ligand>
        <name>Zn(2+)</name>
        <dbReference type="ChEBI" id="CHEBI:29105"/>
    </ligand>
</feature>
<feature type="binding site" evidence="1">
    <location>
        <position position="18"/>
    </location>
    <ligand>
        <name>Zn(2+)</name>
        <dbReference type="ChEBI" id="CHEBI:29105"/>
    </ligand>
</feature>
<feature type="binding site" evidence="1">
    <location>
        <position position="37"/>
    </location>
    <ligand>
        <name>Zn(2+)</name>
        <dbReference type="ChEBI" id="CHEBI:29105"/>
    </ligand>
</feature>
<feature type="binding site" evidence="1">
    <location>
        <position position="40"/>
    </location>
    <ligand>
        <name>Zn(2+)</name>
        <dbReference type="ChEBI" id="CHEBI:29105"/>
    </ligand>
</feature>
<protein>
    <recommendedName>
        <fullName evidence="1">Large ribosomal subunit protein bL31</fullName>
    </recommendedName>
    <alternativeName>
        <fullName evidence="2">50S ribosomal protein L31</fullName>
    </alternativeName>
</protein>
<name>RL31_YERPP</name>